<name>RIBA_VIBPA</name>
<evidence type="ECO:0000255" key="1">
    <source>
        <dbReference type="HAMAP-Rule" id="MF_00179"/>
    </source>
</evidence>
<accession>Q87NE7</accession>
<comment type="function">
    <text evidence="1">Catalyzes the conversion of GTP to 2,5-diamino-6-ribosylamino-4(3H)-pyrimidinone 5'-phosphate (DARP), formate and pyrophosphate.</text>
</comment>
<comment type="catalytic activity">
    <reaction evidence="1">
        <text>GTP + 4 H2O = 2,5-diamino-6-hydroxy-4-(5-phosphoribosylamino)-pyrimidine + formate + 2 phosphate + 3 H(+)</text>
        <dbReference type="Rhea" id="RHEA:23704"/>
        <dbReference type="ChEBI" id="CHEBI:15377"/>
        <dbReference type="ChEBI" id="CHEBI:15378"/>
        <dbReference type="ChEBI" id="CHEBI:15740"/>
        <dbReference type="ChEBI" id="CHEBI:37565"/>
        <dbReference type="ChEBI" id="CHEBI:43474"/>
        <dbReference type="ChEBI" id="CHEBI:58614"/>
        <dbReference type="EC" id="3.5.4.25"/>
    </reaction>
</comment>
<comment type="cofactor">
    <cofactor evidence="1">
        <name>Zn(2+)</name>
        <dbReference type="ChEBI" id="CHEBI:29105"/>
    </cofactor>
    <text evidence="1">Binds 1 zinc ion per subunit.</text>
</comment>
<comment type="pathway">
    <text evidence="1">Cofactor biosynthesis; riboflavin biosynthesis; 5-amino-6-(D-ribitylamino)uracil from GTP: step 1/4.</text>
</comment>
<comment type="similarity">
    <text evidence="1">Belongs to the GTP cyclohydrolase II family.</text>
</comment>
<sequence length="198" mass="22308">MAEVRARVDFKVGAKSNIDAEILSFRGLKTDKEHVAVIFKQADQTQDTPLVRMHSECLTGDVFHSSRCDCGEQLEETIQRMGESGGVILYLRQEGRGIGLYNKIDAYRLQSQGMNTYEANNHLGFDDDLRDFTEAAQMLEALGIKKIRLVTNNPKKIRELAEYGIEIVEVVNTSAHIKDGNENYLRAKVSHGKHNLKV</sequence>
<proteinExistence type="inferred from homology"/>
<organism>
    <name type="scientific">Vibrio parahaemolyticus serotype O3:K6 (strain RIMD 2210633)</name>
    <dbReference type="NCBI Taxonomy" id="223926"/>
    <lineage>
        <taxon>Bacteria</taxon>
        <taxon>Pseudomonadati</taxon>
        <taxon>Pseudomonadota</taxon>
        <taxon>Gammaproteobacteria</taxon>
        <taxon>Vibrionales</taxon>
        <taxon>Vibrionaceae</taxon>
        <taxon>Vibrio</taxon>
    </lineage>
</organism>
<gene>
    <name evidence="1" type="primary">ribA</name>
    <name type="ordered locus">VP1921</name>
</gene>
<protein>
    <recommendedName>
        <fullName evidence="1">GTP cyclohydrolase-2</fullName>
        <ecNumber evidence="1">3.5.4.25</ecNumber>
    </recommendedName>
    <alternativeName>
        <fullName evidence="1">GTP cyclohydrolase II</fullName>
    </alternativeName>
</protein>
<dbReference type="EC" id="3.5.4.25" evidence="1"/>
<dbReference type="EMBL" id="BA000031">
    <property type="protein sequence ID" value="BAC60184.1"/>
    <property type="molecule type" value="Genomic_DNA"/>
</dbReference>
<dbReference type="RefSeq" id="NP_798300.1">
    <property type="nucleotide sequence ID" value="NC_004603.1"/>
</dbReference>
<dbReference type="SMR" id="Q87NE7"/>
<dbReference type="KEGG" id="vpa:VP1921"/>
<dbReference type="PATRIC" id="fig|223926.6.peg.1836"/>
<dbReference type="eggNOG" id="COG0807">
    <property type="taxonomic scope" value="Bacteria"/>
</dbReference>
<dbReference type="HOGENOM" id="CLU_020273_2_1_6"/>
<dbReference type="UniPathway" id="UPA00275">
    <property type="reaction ID" value="UER00400"/>
</dbReference>
<dbReference type="Proteomes" id="UP000002493">
    <property type="component" value="Chromosome 1"/>
</dbReference>
<dbReference type="GO" id="GO:0005829">
    <property type="term" value="C:cytosol"/>
    <property type="evidence" value="ECO:0007669"/>
    <property type="project" value="TreeGrafter"/>
</dbReference>
<dbReference type="GO" id="GO:0005525">
    <property type="term" value="F:GTP binding"/>
    <property type="evidence" value="ECO:0007669"/>
    <property type="project" value="UniProtKB-KW"/>
</dbReference>
<dbReference type="GO" id="GO:0003935">
    <property type="term" value="F:GTP cyclohydrolase II activity"/>
    <property type="evidence" value="ECO:0007669"/>
    <property type="project" value="UniProtKB-UniRule"/>
</dbReference>
<dbReference type="GO" id="GO:0008270">
    <property type="term" value="F:zinc ion binding"/>
    <property type="evidence" value="ECO:0007669"/>
    <property type="project" value="UniProtKB-UniRule"/>
</dbReference>
<dbReference type="GO" id="GO:0009231">
    <property type="term" value="P:riboflavin biosynthetic process"/>
    <property type="evidence" value="ECO:0007669"/>
    <property type="project" value="UniProtKB-UniRule"/>
</dbReference>
<dbReference type="CDD" id="cd00641">
    <property type="entry name" value="GTP_cyclohydro2"/>
    <property type="match status" value="1"/>
</dbReference>
<dbReference type="FunFam" id="3.40.50.10990:FF:000001">
    <property type="entry name" value="Riboflavin biosynthesis protein RibBA"/>
    <property type="match status" value="1"/>
</dbReference>
<dbReference type="Gene3D" id="3.40.50.10990">
    <property type="entry name" value="GTP cyclohydrolase II"/>
    <property type="match status" value="1"/>
</dbReference>
<dbReference type="HAMAP" id="MF_00179">
    <property type="entry name" value="RibA"/>
    <property type="match status" value="1"/>
</dbReference>
<dbReference type="InterPro" id="IPR032677">
    <property type="entry name" value="GTP_cyclohydro_II"/>
</dbReference>
<dbReference type="InterPro" id="IPR000926">
    <property type="entry name" value="RibA"/>
</dbReference>
<dbReference type="InterPro" id="IPR036144">
    <property type="entry name" value="RibA-like_sf"/>
</dbReference>
<dbReference type="NCBIfam" id="NF001591">
    <property type="entry name" value="PRK00393.1"/>
    <property type="match status" value="1"/>
</dbReference>
<dbReference type="NCBIfam" id="TIGR00505">
    <property type="entry name" value="ribA"/>
    <property type="match status" value="1"/>
</dbReference>
<dbReference type="PANTHER" id="PTHR21327:SF18">
    <property type="entry name" value="3,4-DIHYDROXY-2-BUTANONE 4-PHOSPHATE SYNTHASE"/>
    <property type="match status" value="1"/>
</dbReference>
<dbReference type="PANTHER" id="PTHR21327">
    <property type="entry name" value="GTP CYCLOHYDROLASE II-RELATED"/>
    <property type="match status" value="1"/>
</dbReference>
<dbReference type="Pfam" id="PF00925">
    <property type="entry name" value="GTP_cyclohydro2"/>
    <property type="match status" value="1"/>
</dbReference>
<dbReference type="SUPFAM" id="SSF142695">
    <property type="entry name" value="RibA-like"/>
    <property type="match status" value="1"/>
</dbReference>
<keyword id="KW-0342">GTP-binding</keyword>
<keyword id="KW-0378">Hydrolase</keyword>
<keyword id="KW-0479">Metal-binding</keyword>
<keyword id="KW-0547">Nucleotide-binding</keyword>
<keyword id="KW-0686">Riboflavin biosynthesis</keyword>
<keyword id="KW-0862">Zinc</keyword>
<reference key="1">
    <citation type="journal article" date="2003" name="Lancet">
        <title>Genome sequence of Vibrio parahaemolyticus: a pathogenic mechanism distinct from that of V. cholerae.</title>
        <authorList>
            <person name="Makino K."/>
            <person name="Oshima K."/>
            <person name="Kurokawa K."/>
            <person name="Yokoyama K."/>
            <person name="Uda T."/>
            <person name="Tagomori K."/>
            <person name="Iijima Y."/>
            <person name="Najima M."/>
            <person name="Nakano M."/>
            <person name="Yamashita A."/>
            <person name="Kubota Y."/>
            <person name="Kimura S."/>
            <person name="Yasunaga T."/>
            <person name="Honda T."/>
            <person name="Shinagawa H."/>
            <person name="Hattori M."/>
            <person name="Iida T."/>
        </authorList>
    </citation>
    <scope>NUCLEOTIDE SEQUENCE [LARGE SCALE GENOMIC DNA]</scope>
    <source>
        <strain>RIMD 2210633</strain>
    </source>
</reference>
<feature type="chain" id="PRO_0000151779" description="GTP cyclohydrolase-2">
    <location>
        <begin position="1"/>
        <end position="198"/>
    </location>
</feature>
<feature type="active site" description="Proton acceptor" evidence="1">
    <location>
        <position position="128"/>
    </location>
</feature>
<feature type="active site" description="Nucleophile" evidence="1">
    <location>
        <position position="130"/>
    </location>
</feature>
<feature type="binding site" evidence="1">
    <location>
        <begin position="52"/>
        <end position="56"/>
    </location>
    <ligand>
        <name>GTP</name>
        <dbReference type="ChEBI" id="CHEBI:37565"/>
    </ligand>
</feature>
<feature type="binding site" evidence="1">
    <location>
        <position position="57"/>
    </location>
    <ligand>
        <name>Zn(2+)</name>
        <dbReference type="ChEBI" id="CHEBI:29105"/>
        <note>catalytic</note>
    </ligand>
</feature>
<feature type="binding site" evidence="1">
    <location>
        <position position="68"/>
    </location>
    <ligand>
        <name>Zn(2+)</name>
        <dbReference type="ChEBI" id="CHEBI:29105"/>
        <note>catalytic</note>
    </ligand>
</feature>
<feature type="binding site" evidence="1">
    <location>
        <position position="70"/>
    </location>
    <ligand>
        <name>Zn(2+)</name>
        <dbReference type="ChEBI" id="CHEBI:29105"/>
        <note>catalytic</note>
    </ligand>
</feature>
<feature type="binding site" evidence="1">
    <location>
        <position position="73"/>
    </location>
    <ligand>
        <name>GTP</name>
        <dbReference type="ChEBI" id="CHEBI:37565"/>
    </ligand>
</feature>
<feature type="binding site" evidence="1">
    <location>
        <begin position="94"/>
        <end position="96"/>
    </location>
    <ligand>
        <name>GTP</name>
        <dbReference type="ChEBI" id="CHEBI:37565"/>
    </ligand>
</feature>
<feature type="binding site" evidence="1">
    <location>
        <position position="116"/>
    </location>
    <ligand>
        <name>GTP</name>
        <dbReference type="ChEBI" id="CHEBI:37565"/>
    </ligand>
</feature>
<feature type="binding site" evidence="1">
    <location>
        <position position="151"/>
    </location>
    <ligand>
        <name>GTP</name>
        <dbReference type="ChEBI" id="CHEBI:37565"/>
    </ligand>
</feature>
<feature type="binding site" evidence="1">
    <location>
        <position position="156"/>
    </location>
    <ligand>
        <name>GTP</name>
        <dbReference type="ChEBI" id="CHEBI:37565"/>
    </ligand>
</feature>